<gene>
    <name evidence="1" type="primary">rnc</name>
    <name type="ordered locus">spr1127</name>
</gene>
<keyword id="KW-0963">Cytoplasm</keyword>
<keyword id="KW-0255">Endonuclease</keyword>
<keyword id="KW-0378">Hydrolase</keyword>
<keyword id="KW-0460">Magnesium</keyword>
<keyword id="KW-0479">Metal-binding</keyword>
<keyword id="KW-0507">mRNA processing</keyword>
<keyword id="KW-0540">Nuclease</keyword>
<keyword id="KW-1185">Reference proteome</keyword>
<keyword id="KW-0694">RNA-binding</keyword>
<keyword id="KW-0698">rRNA processing</keyword>
<keyword id="KW-0699">rRNA-binding</keyword>
<keyword id="KW-0819">tRNA processing</keyword>
<feature type="chain" id="PRO_0000180442" description="Ribonuclease 3">
    <location>
        <begin position="1"/>
        <end position="232"/>
    </location>
</feature>
<feature type="domain" description="RNase III" evidence="1">
    <location>
        <begin position="5"/>
        <end position="134"/>
    </location>
</feature>
<feature type="domain" description="DRBM" evidence="1">
    <location>
        <begin position="160"/>
        <end position="229"/>
    </location>
</feature>
<feature type="active site" evidence="1">
    <location>
        <position position="51"/>
    </location>
</feature>
<feature type="active site" evidence="1">
    <location>
        <position position="123"/>
    </location>
</feature>
<feature type="binding site" evidence="1">
    <location>
        <position position="47"/>
    </location>
    <ligand>
        <name>Mg(2+)</name>
        <dbReference type="ChEBI" id="CHEBI:18420"/>
    </ligand>
</feature>
<feature type="binding site" evidence="1">
    <location>
        <position position="120"/>
    </location>
    <ligand>
        <name>Mg(2+)</name>
        <dbReference type="ChEBI" id="CHEBI:18420"/>
    </ligand>
</feature>
<feature type="binding site" evidence="1">
    <location>
        <position position="123"/>
    </location>
    <ligand>
        <name>Mg(2+)</name>
        <dbReference type="ChEBI" id="CHEBI:18420"/>
    </ligand>
</feature>
<evidence type="ECO:0000255" key="1">
    <source>
        <dbReference type="HAMAP-Rule" id="MF_00104"/>
    </source>
</evidence>
<reference key="1">
    <citation type="journal article" date="2001" name="J. Bacteriol.">
        <title>Genome of the bacterium Streptococcus pneumoniae strain R6.</title>
        <authorList>
            <person name="Hoskins J."/>
            <person name="Alborn W.E. Jr."/>
            <person name="Arnold J."/>
            <person name="Blaszczak L.C."/>
            <person name="Burgett S."/>
            <person name="DeHoff B.S."/>
            <person name="Estrem S.T."/>
            <person name="Fritz L."/>
            <person name="Fu D.-J."/>
            <person name="Fuller W."/>
            <person name="Geringer C."/>
            <person name="Gilmour R."/>
            <person name="Glass J.S."/>
            <person name="Khoja H."/>
            <person name="Kraft A.R."/>
            <person name="Lagace R.E."/>
            <person name="LeBlanc D.J."/>
            <person name="Lee L.N."/>
            <person name="Lefkowitz E.J."/>
            <person name="Lu J."/>
            <person name="Matsushima P."/>
            <person name="McAhren S.M."/>
            <person name="McHenney M."/>
            <person name="McLeaster K."/>
            <person name="Mundy C.W."/>
            <person name="Nicas T.I."/>
            <person name="Norris F.H."/>
            <person name="O'Gara M."/>
            <person name="Peery R.B."/>
            <person name="Robertson G.T."/>
            <person name="Rockey P."/>
            <person name="Sun P.-M."/>
            <person name="Winkler M.E."/>
            <person name="Yang Y."/>
            <person name="Young-Bellido M."/>
            <person name="Zhao G."/>
            <person name="Zook C.A."/>
            <person name="Baltz R.H."/>
            <person name="Jaskunas S.R."/>
            <person name="Rosteck P.R. Jr."/>
            <person name="Skatrud P.L."/>
            <person name="Glass J.I."/>
        </authorList>
    </citation>
    <scope>NUCLEOTIDE SEQUENCE [LARGE SCALE GENOMIC DNA]</scope>
    <source>
        <strain>ATCC BAA-255 / R6</strain>
    </source>
</reference>
<protein>
    <recommendedName>
        <fullName evidence="1">Ribonuclease 3</fullName>
        <ecNumber evidence="1">3.1.26.3</ecNumber>
    </recommendedName>
    <alternativeName>
        <fullName evidence="1">Ribonuclease III</fullName>
        <shortName evidence="1">RNase III</shortName>
    </alternativeName>
</protein>
<sequence>MKELQTVLKNHFEIEFADKKLLETAFTHTSYANEHRLLKISHNERLEFLGDAVLQLLISEYLYKKYPKKPEGDLSKLRAMIVREESLAGFARDCQFDQFIKLGKGEEKSGGRNRDTILGDAFEAFLGALLLDKDVAKVKEFIYQVMIPKVEAGEFEMITDYKTHLQELLQVNGDVAIRYQVISETGPAHDKVFDVEVLVEGKSIGQGQGRSKKLAEQEAAKNAVEKGLDSCI</sequence>
<proteinExistence type="inferred from homology"/>
<organism>
    <name type="scientific">Streptococcus pneumoniae (strain ATCC BAA-255 / R6)</name>
    <dbReference type="NCBI Taxonomy" id="171101"/>
    <lineage>
        <taxon>Bacteria</taxon>
        <taxon>Bacillati</taxon>
        <taxon>Bacillota</taxon>
        <taxon>Bacilli</taxon>
        <taxon>Lactobacillales</taxon>
        <taxon>Streptococcaceae</taxon>
        <taxon>Streptococcus</taxon>
    </lineage>
</organism>
<comment type="function">
    <text evidence="1">Digests double-stranded RNA. Involved in the processing of primary rRNA transcript to yield the immediate precursors to the large and small rRNAs (23S and 16S). Processes some mRNAs, and tRNAs when they are encoded in the rRNA operon. Processes pre-crRNA and tracrRNA of type II CRISPR loci if present in the organism.</text>
</comment>
<comment type="catalytic activity">
    <reaction evidence="1">
        <text>Endonucleolytic cleavage to 5'-phosphomonoester.</text>
        <dbReference type="EC" id="3.1.26.3"/>
    </reaction>
</comment>
<comment type="cofactor">
    <cofactor evidence="1">
        <name>Mg(2+)</name>
        <dbReference type="ChEBI" id="CHEBI:18420"/>
    </cofactor>
</comment>
<comment type="subunit">
    <text evidence="1">Homodimer.</text>
</comment>
<comment type="subcellular location">
    <subcellularLocation>
        <location evidence="1">Cytoplasm</location>
    </subcellularLocation>
</comment>
<comment type="similarity">
    <text evidence="1">Belongs to the ribonuclease III family.</text>
</comment>
<accession>Q8DPJ8</accession>
<dbReference type="EC" id="3.1.26.3" evidence="1"/>
<dbReference type="EMBL" id="AE007317">
    <property type="protein sequence ID" value="AAK99930.1"/>
    <property type="molecule type" value="Genomic_DNA"/>
</dbReference>
<dbReference type="PIR" id="F98012">
    <property type="entry name" value="F98012"/>
</dbReference>
<dbReference type="RefSeq" id="NP_358720.1">
    <property type="nucleotide sequence ID" value="NC_003098.1"/>
</dbReference>
<dbReference type="RefSeq" id="WP_000661507.1">
    <property type="nucleotide sequence ID" value="NC_003098.1"/>
</dbReference>
<dbReference type="SMR" id="Q8DPJ8"/>
<dbReference type="STRING" id="171101.spr1127"/>
<dbReference type="KEGG" id="spr:spr1127"/>
<dbReference type="PATRIC" id="fig|171101.6.peg.1223"/>
<dbReference type="eggNOG" id="COG0571">
    <property type="taxonomic scope" value="Bacteria"/>
</dbReference>
<dbReference type="HOGENOM" id="CLU_000907_1_3_9"/>
<dbReference type="Proteomes" id="UP000000586">
    <property type="component" value="Chromosome"/>
</dbReference>
<dbReference type="GO" id="GO:0005829">
    <property type="term" value="C:cytosol"/>
    <property type="evidence" value="ECO:0000318"/>
    <property type="project" value="GO_Central"/>
</dbReference>
<dbReference type="GO" id="GO:0003725">
    <property type="term" value="F:double-stranded RNA binding"/>
    <property type="evidence" value="ECO:0000318"/>
    <property type="project" value="GO_Central"/>
</dbReference>
<dbReference type="GO" id="GO:0046872">
    <property type="term" value="F:metal ion binding"/>
    <property type="evidence" value="ECO:0007669"/>
    <property type="project" value="UniProtKB-KW"/>
</dbReference>
<dbReference type="GO" id="GO:0004525">
    <property type="term" value="F:ribonuclease III activity"/>
    <property type="evidence" value="ECO:0000318"/>
    <property type="project" value="GO_Central"/>
</dbReference>
<dbReference type="GO" id="GO:0019843">
    <property type="term" value="F:rRNA binding"/>
    <property type="evidence" value="ECO:0007669"/>
    <property type="project" value="UniProtKB-KW"/>
</dbReference>
<dbReference type="GO" id="GO:0006397">
    <property type="term" value="P:mRNA processing"/>
    <property type="evidence" value="ECO:0007669"/>
    <property type="project" value="UniProtKB-UniRule"/>
</dbReference>
<dbReference type="GO" id="GO:0010468">
    <property type="term" value="P:regulation of gene expression"/>
    <property type="evidence" value="ECO:0000318"/>
    <property type="project" value="GO_Central"/>
</dbReference>
<dbReference type="GO" id="GO:0006396">
    <property type="term" value="P:RNA processing"/>
    <property type="evidence" value="ECO:0000318"/>
    <property type="project" value="GO_Central"/>
</dbReference>
<dbReference type="GO" id="GO:0006364">
    <property type="term" value="P:rRNA processing"/>
    <property type="evidence" value="ECO:0007669"/>
    <property type="project" value="UniProtKB-UniRule"/>
</dbReference>
<dbReference type="GO" id="GO:0008033">
    <property type="term" value="P:tRNA processing"/>
    <property type="evidence" value="ECO:0007669"/>
    <property type="project" value="UniProtKB-KW"/>
</dbReference>
<dbReference type="CDD" id="cd10845">
    <property type="entry name" value="DSRM_RNAse_III_family"/>
    <property type="match status" value="1"/>
</dbReference>
<dbReference type="CDD" id="cd00593">
    <property type="entry name" value="RIBOc"/>
    <property type="match status" value="1"/>
</dbReference>
<dbReference type="FunFam" id="1.10.1520.10:FF:000001">
    <property type="entry name" value="Ribonuclease 3"/>
    <property type="match status" value="1"/>
</dbReference>
<dbReference type="FunFam" id="3.30.160.20:FF:000003">
    <property type="entry name" value="Ribonuclease 3"/>
    <property type="match status" value="1"/>
</dbReference>
<dbReference type="Gene3D" id="3.30.160.20">
    <property type="match status" value="1"/>
</dbReference>
<dbReference type="Gene3D" id="1.10.1520.10">
    <property type="entry name" value="Ribonuclease III domain"/>
    <property type="match status" value="1"/>
</dbReference>
<dbReference type="HAMAP" id="MF_00104">
    <property type="entry name" value="RNase_III"/>
    <property type="match status" value="1"/>
</dbReference>
<dbReference type="InterPro" id="IPR014720">
    <property type="entry name" value="dsRBD_dom"/>
</dbReference>
<dbReference type="InterPro" id="IPR011907">
    <property type="entry name" value="RNase_III"/>
</dbReference>
<dbReference type="InterPro" id="IPR000999">
    <property type="entry name" value="RNase_III_dom"/>
</dbReference>
<dbReference type="InterPro" id="IPR036389">
    <property type="entry name" value="RNase_III_sf"/>
</dbReference>
<dbReference type="NCBIfam" id="TIGR02191">
    <property type="entry name" value="RNaseIII"/>
    <property type="match status" value="1"/>
</dbReference>
<dbReference type="PANTHER" id="PTHR11207:SF0">
    <property type="entry name" value="RIBONUCLEASE 3"/>
    <property type="match status" value="1"/>
</dbReference>
<dbReference type="PANTHER" id="PTHR11207">
    <property type="entry name" value="RIBONUCLEASE III"/>
    <property type="match status" value="1"/>
</dbReference>
<dbReference type="Pfam" id="PF00035">
    <property type="entry name" value="dsrm"/>
    <property type="match status" value="1"/>
</dbReference>
<dbReference type="Pfam" id="PF14622">
    <property type="entry name" value="Ribonucleas_3_3"/>
    <property type="match status" value="1"/>
</dbReference>
<dbReference type="SMART" id="SM00358">
    <property type="entry name" value="DSRM"/>
    <property type="match status" value="1"/>
</dbReference>
<dbReference type="SMART" id="SM00535">
    <property type="entry name" value="RIBOc"/>
    <property type="match status" value="1"/>
</dbReference>
<dbReference type="SUPFAM" id="SSF54768">
    <property type="entry name" value="dsRNA-binding domain-like"/>
    <property type="match status" value="1"/>
</dbReference>
<dbReference type="SUPFAM" id="SSF69065">
    <property type="entry name" value="RNase III domain-like"/>
    <property type="match status" value="1"/>
</dbReference>
<dbReference type="PROSITE" id="PS50137">
    <property type="entry name" value="DS_RBD"/>
    <property type="match status" value="1"/>
</dbReference>
<dbReference type="PROSITE" id="PS00517">
    <property type="entry name" value="RNASE_3_1"/>
    <property type="match status" value="1"/>
</dbReference>
<dbReference type="PROSITE" id="PS50142">
    <property type="entry name" value="RNASE_3_2"/>
    <property type="match status" value="1"/>
</dbReference>
<name>RNC_STRR6</name>